<organism>
    <name type="scientific">Azotobacter vinelandii (strain DJ / ATCC BAA-1303)</name>
    <dbReference type="NCBI Taxonomy" id="322710"/>
    <lineage>
        <taxon>Bacteria</taxon>
        <taxon>Pseudomonadati</taxon>
        <taxon>Pseudomonadota</taxon>
        <taxon>Gammaproteobacteria</taxon>
        <taxon>Pseudomonadales</taxon>
        <taxon>Pseudomonadaceae</taxon>
        <taxon>Azotobacter</taxon>
    </lineage>
</organism>
<accession>C1DDV7</accession>
<name>SLYX_AZOVD</name>
<feature type="chain" id="PRO_1000212680" description="Protein SlyX homolog">
    <location>
        <begin position="1"/>
        <end position="71"/>
    </location>
</feature>
<proteinExistence type="inferred from homology"/>
<comment type="similarity">
    <text evidence="1">Belongs to the SlyX family.</text>
</comment>
<dbReference type="EMBL" id="CP001157">
    <property type="protein sequence ID" value="ACO78078.1"/>
    <property type="molecule type" value="Genomic_DNA"/>
</dbReference>
<dbReference type="RefSeq" id="WP_012700487.1">
    <property type="nucleotide sequence ID" value="NC_012560.1"/>
</dbReference>
<dbReference type="SMR" id="C1DDV7"/>
<dbReference type="STRING" id="322710.Avin_18660"/>
<dbReference type="EnsemblBacteria" id="ACO78078">
    <property type="protein sequence ID" value="ACO78078"/>
    <property type="gene ID" value="Avin_18660"/>
</dbReference>
<dbReference type="GeneID" id="88185108"/>
<dbReference type="KEGG" id="avn:Avin_18660"/>
<dbReference type="eggNOG" id="COG2900">
    <property type="taxonomic scope" value="Bacteria"/>
</dbReference>
<dbReference type="HOGENOM" id="CLU_180796_4_1_6"/>
<dbReference type="Proteomes" id="UP000002424">
    <property type="component" value="Chromosome"/>
</dbReference>
<dbReference type="Gene3D" id="1.20.5.300">
    <property type="match status" value="1"/>
</dbReference>
<dbReference type="HAMAP" id="MF_00715">
    <property type="entry name" value="SlyX"/>
    <property type="match status" value="1"/>
</dbReference>
<dbReference type="InterPro" id="IPR007236">
    <property type="entry name" value="SlyX"/>
</dbReference>
<dbReference type="NCBIfam" id="NF001421">
    <property type="entry name" value="PRK00295.1"/>
    <property type="match status" value="1"/>
</dbReference>
<dbReference type="PANTHER" id="PTHR36508">
    <property type="entry name" value="PROTEIN SLYX"/>
    <property type="match status" value="1"/>
</dbReference>
<dbReference type="PANTHER" id="PTHR36508:SF1">
    <property type="entry name" value="PROTEIN SLYX"/>
    <property type="match status" value="1"/>
</dbReference>
<dbReference type="Pfam" id="PF04102">
    <property type="entry name" value="SlyX"/>
    <property type="match status" value="1"/>
</dbReference>
<gene>
    <name evidence="1" type="primary">slyX</name>
    <name type="ordered locus">Avin_18660</name>
</gene>
<reference key="1">
    <citation type="journal article" date="2009" name="J. Bacteriol.">
        <title>Genome sequence of Azotobacter vinelandii, an obligate aerobe specialized to support diverse anaerobic metabolic processes.</title>
        <authorList>
            <person name="Setubal J.C."/>
            <person name="Dos Santos P."/>
            <person name="Goldman B.S."/>
            <person name="Ertesvaag H."/>
            <person name="Espin G."/>
            <person name="Rubio L.M."/>
            <person name="Valla S."/>
            <person name="Almeida N.F."/>
            <person name="Balasubramanian D."/>
            <person name="Cromes L."/>
            <person name="Curatti L."/>
            <person name="Du Z."/>
            <person name="Godsy E."/>
            <person name="Goodner B."/>
            <person name="Hellner-Burris K."/>
            <person name="Hernandez J.A."/>
            <person name="Houmiel K."/>
            <person name="Imperial J."/>
            <person name="Kennedy C."/>
            <person name="Larson T.J."/>
            <person name="Latreille P."/>
            <person name="Ligon L.S."/>
            <person name="Lu J."/>
            <person name="Maerk M."/>
            <person name="Miller N.M."/>
            <person name="Norton S."/>
            <person name="O'Carroll I.P."/>
            <person name="Paulsen I."/>
            <person name="Raulfs E.C."/>
            <person name="Roemer R."/>
            <person name="Rosser J."/>
            <person name="Segura D."/>
            <person name="Slater S."/>
            <person name="Stricklin S.L."/>
            <person name="Studholme D.J."/>
            <person name="Sun J."/>
            <person name="Viana C.J."/>
            <person name="Wallin E."/>
            <person name="Wang B."/>
            <person name="Wheeler C."/>
            <person name="Zhu H."/>
            <person name="Dean D.R."/>
            <person name="Dixon R."/>
            <person name="Wood D."/>
        </authorList>
    </citation>
    <scope>NUCLEOTIDE SEQUENCE [LARGE SCALE GENOMIC DNA]</scope>
    <source>
        <strain>DJ / ATCC BAA-1303</strain>
    </source>
</reference>
<evidence type="ECO:0000255" key="1">
    <source>
        <dbReference type="HAMAP-Rule" id="MF_00715"/>
    </source>
</evidence>
<sequence>MNMSLETRINDLETRLAFQDDTIQALNDVLVAQQRVVERLQMQLEALAKRQEELIEEFGSVDDDGAPPPHY</sequence>
<protein>
    <recommendedName>
        <fullName evidence="1">Protein SlyX homolog</fullName>
    </recommendedName>
</protein>